<accession>B2G609</accession>
<name>Y375_LIMRJ</name>
<sequence>MVDKKLKVVIITGMSGAGKTVAVHSLEDLGYFVIDNMLPGLAERFVDVIEDSREFDKIAMVMDMRSRGFYDEVLPNFEKLKKRADLDVKLLFLDANDVTLISRYKETRRSHPLSPQGRILDGVELERKLSTDLKSQADIVIDTTNVTPRNLKLRLNKLFGHGEGNDFYVEVMSFGFKYGLPLDADIVMDVRFLPNPFYIPELKHLTGNDPAVQNYVMQSPLAKEFYQHLRSLLEIALPGYIKEGKSSLTIAIGCTGGQHRSVTIANKLSADLKEKGYKVNTYHRDIEKAK</sequence>
<reference key="1">
    <citation type="journal article" date="2008" name="DNA Res.">
        <title>Comparative genome analysis of Lactobacillus reuteri and Lactobacillus fermentum reveal a genomic island for reuterin and cobalamin production.</title>
        <authorList>
            <person name="Morita H."/>
            <person name="Toh H."/>
            <person name="Fukuda S."/>
            <person name="Horikawa H."/>
            <person name="Oshima K."/>
            <person name="Suzuki T."/>
            <person name="Murakami M."/>
            <person name="Hisamatsu S."/>
            <person name="Kato Y."/>
            <person name="Takizawa T."/>
            <person name="Fukuoka H."/>
            <person name="Yoshimura T."/>
            <person name="Itoh K."/>
            <person name="O'Sullivan D.J."/>
            <person name="McKay L.L."/>
            <person name="Ohno H."/>
            <person name="Kikuchi J."/>
            <person name="Masaoka T."/>
            <person name="Hattori M."/>
        </authorList>
    </citation>
    <scope>NUCLEOTIDE SEQUENCE [LARGE SCALE GENOMIC DNA]</scope>
    <source>
        <strain>JCM 1112</strain>
    </source>
</reference>
<comment type="function">
    <text evidence="1">Displays ATPase and GTPase activities.</text>
</comment>
<comment type="similarity">
    <text evidence="1">Belongs to the RapZ-like family.</text>
</comment>
<protein>
    <recommendedName>
        <fullName evidence="1">Nucleotide-binding protein LAR_0375</fullName>
    </recommendedName>
</protein>
<organism>
    <name type="scientific">Limosilactobacillus reuteri subsp. reuteri (strain JCM 1112)</name>
    <name type="common">Lactobacillus reuteri</name>
    <dbReference type="NCBI Taxonomy" id="557433"/>
    <lineage>
        <taxon>Bacteria</taxon>
        <taxon>Bacillati</taxon>
        <taxon>Bacillota</taxon>
        <taxon>Bacilli</taxon>
        <taxon>Lactobacillales</taxon>
        <taxon>Lactobacillaceae</taxon>
        <taxon>Limosilactobacillus</taxon>
    </lineage>
</organism>
<proteinExistence type="inferred from homology"/>
<feature type="chain" id="PRO_1000130767" description="Nucleotide-binding protein LAR_0375">
    <location>
        <begin position="1"/>
        <end position="290"/>
    </location>
</feature>
<feature type="binding site" evidence="1">
    <location>
        <begin position="13"/>
        <end position="20"/>
    </location>
    <ligand>
        <name>ATP</name>
        <dbReference type="ChEBI" id="CHEBI:30616"/>
    </ligand>
</feature>
<feature type="binding site" evidence="1">
    <location>
        <begin position="63"/>
        <end position="66"/>
    </location>
    <ligand>
        <name>GTP</name>
        <dbReference type="ChEBI" id="CHEBI:37565"/>
    </ligand>
</feature>
<keyword id="KW-0067">ATP-binding</keyword>
<keyword id="KW-0342">GTP-binding</keyword>
<keyword id="KW-0547">Nucleotide-binding</keyword>
<evidence type="ECO:0000255" key="1">
    <source>
        <dbReference type="HAMAP-Rule" id="MF_00636"/>
    </source>
</evidence>
<gene>
    <name type="ordered locus">LAR_0375</name>
</gene>
<dbReference type="EMBL" id="AP007281">
    <property type="protein sequence ID" value="BAG24891.1"/>
    <property type="molecule type" value="Genomic_DNA"/>
</dbReference>
<dbReference type="SMR" id="B2G609"/>
<dbReference type="KEGG" id="lrf:LAR_0375"/>
<dbReference type="HOGENOM" id="CLU_059558_0_0_9"/>
<dbReference type="GO" id="GO:0005524">
    <property type="term" value="F:ATP binding"/>
    <property type="evidence" value="ECO:0007669"/>
    <property type="project" value="UniProtKB-UniRule"/>
</dbReference>
<dbReference type="GO" id="GO:0005525">
    <property type="term" value="F:GTP binding"/>
    <property type="evidence" value="ECO:0007669"/>
    <property type="project" value="UniProtKB-UniRule"/>
</dbReference>
<dbReference type="Gene3D" id="3.40.50.300">
    <property type="entry name" value="P-loop containing nucleotide triphosphate hydrolases"/>
    <property type="match status" value="1"/>
</dbReference>
<dbReference type="HAMAP" id="MF_00636">
    <property type="entry name" value="RapZ_like"/>
    <property type="match status" value="1"/>
</dbReference>
<dbReference type="InterPro" id="IPR027417">
    <property type="entry name" value="P-loop_NTPase"/>
</dbReference>
<dbReference type="InterPro" id="IPR005337">
    <property type="entry name" value="RapZ-like"/>
</dbReference>
<dbReference type="InterPro" id="IPR053930">
    <property type="entry name" value="RapZ-like_N"/>
</dbReference>
<dbReference type="InterPro" id="IPR053931">
    <property type="entry name" value="RapZ_C"/>
</dbReference>
<dbReference type="NCBIfam" id="NF003828">
    <property type="entry name" value="PRK05416.1"/>
    <property type="match status" value="1"/>
</dbReference>
<dbReference type="PANTHER" id="PTHR30448">
    <property type="entry name" value="RNASE ADAPTER PROTEIN RAPZ"/>
    <property type="match status" value="1"/>
</dbReference>
<dbReference type="PANTHER" id="PTHR30448:SF0">
    <property type="entry name" value="RNASE ADAPTER PROTEIN RAPZ"/>
    <property type="match status" value="1"/>
</dbReference>
<dbReference type="Pfam" id="PF22740">
    <property type="entry name" value="PapZ_C"/>
    <property type="match status" value="1"/>
</dbReference>
<dbReference type="Pfam" id="PF03668">
    <property type="entry name" value="RapZ-like_N"/>
    <property type="match status" value="1"/>
</dbReference>
<dbReference type="PIRSF" id="PIRSF005052">
    <property type="entry name" value="P-loopkin"/>
    <property type="match status" value="1"/>
</dbReference>
<dbReference type="SUPFAM" id="SSF52540">
    <property type="entry name" value="P-loop containing nucleoside triphosphate hydrolases"/>
    <property type="match status" value="1"/>
</dbReference>